<organism>
    <name type="scientific">Pseudomonas aeruginosa (strain UCBPP-PA14)</name>
    <dbReference type="NCBI Taxonomy" id="208963"/>
    <lineage>
        <taxon>Bacteria</taxon>
        <taxon>Pseudomonadati</taxon>
        <taxon>Pseudomonadota</taxon>
        <taxon>Gammaproteobacteria</taxon>
        <taxon>Pseudomonadales</taxon>
        <taxon>Pseudomonadaceae</taxon>
        <taxon>Pseudomonas</taxon>
    </lineage>
</organism>
<comment type="function">
    <text evidence="1">Necessary for the introduction of cis unsaturation into fatty acids. Catalyzes the dehydration of (3R)-3-hydroxydecanoyl-ACP to E-(2)-decenoyl-ACP and then its isomerization to Z-(3)-decenoyl-ACP. Can catalyze the dehydratase reaction for beta-hydroxyacyl-ACPs with saturated chain lengths up to 16:0, being most active on intermediate chain length.</text>
</comment>
<comment type="catalytic activity">
    <reaction evidence="1">
        <text>a (3R)-hydroxyacyl-[ACP] = a (2E)-enoyl-[ACP] + H2O</text>
        <dbReference type="Rhea" id="RHEA:13097"/>
        <dbReference type="Rhea" id="RHEA-COMP:9925"/>
        <dbReference type="Rhea" id="RHEA-COMP:9945"/>
        <dbReference type="ChEBI" id="CHEBI:15377"/>
        <dbReference type="ChEBI" id="CHEBI:78784"/>
        <dbReference type="ChEBI" id="CHEBI:78827"/>
        <dbReference type="EC" id="4.2.1.59"/>
    </reaction>
</comment>
<comment type="catalytic activity">
    <reaction evidence="1">
        <text>(3R)-hydroxydecanoyl-[ACP] = (2E)-decenoyl-[ACP] + H2O</text>
        <dbReference type="Rhea" id="RHEA:41860"/>
        <dbReference type="Rhea" id="RHEA-COMP:9638"/>
        <dbReference type="Rhea" id="RHEA-COMP:9639"/>
        <dbReference type="ChEBI" id="CHEBI:15377"/>
        <dbReference type="ChEBI" id="CHEBI:78466"/>
        <dbReference type="ChEBI" id="CHEBI:78467"/>
    </reaction>
</comment>
<comment type="catalytic activity">
    <reaction evidence="1">
        <text>(2E)-decenoyl-[ACP] = (3Z)-decenoyl-[ACP]</text>
        <dbReference type="Rhea" id="RHEA:23568"/>
        <dbReference type="Rhea" id="RHEA-COMP:9639"/>
        <dbReference type="Rhea" id="RHEA-COMP:9927"/>
        <dbReference type="ChEBI" id="CHEBI:78467"/>
        <dbReference type="ChEBI" id="CHEBI:78798"/>
        <dbReference type="EC" id="5.3.3.14"/>
    </reaction>
</comment>
<comment type="pathway">
    <text evidence="1">Lipid metabolism; fatty acid biosynthesis.</text>
</comment>
<comment type="subunit">
    <text evidence="1">Homodimer.</text>
</comment>
<comment type="subcellular location">
    <subcellularLocation>
        <location evidence="1">Cytoplasm</location>
    </subcellularLocation>
</comment>
<comment type="similarity">
    <text evidence="1">Belongs to the thioester dehydratase family. FabA subfamily.</text>
</comment>
<keyword id="KW-0963">Cytoplasm</keyword>
<keyword id="KW-0275">Fatty acid biosynthesis</keyword>
<keyword id="KW-0276">Fatty acid metabolism</keyword>
<keyword id="KW-0413">Isomerase</keyword>
<keyword id="KW-0444">Lipid biosynthesis</keyword>
<keyword id="KW-0443">Lipid metabolism</keyword>
<keyword id="KW-0456">Lyase</keyword>
<feature type="chain" id="PRO_0000301872" description="3-hydroxydecanoyl-[acyl-carrier-protein] dehydratase">
    <location>
        <begin position="1"/>
        <end position="171"/>
    </location>
</feature>
<feature type="active site" evidence="1">
    <location>
        <position position="70"/>
    </location>
</feature>
<protein>
    <recommendedName>
        <fullName evidence="1">3-hydroxydecanoyl-[acyl-carrier-protein] dehydratase</fullName>
        <ecNumber evidence="1">4.2.1.59</ecNumber>
    </recommendedName>
    <alternativeName>
        <fullName evidence="1">3-hydroxyacyl-[acyl-carrier-protein] dehydratase FabA</fullName>
    </alternativeName>
    <alternativeName>
        <fullName evidence="1">Beta-hydroxydecanoyl thioester dehydrase</fullName>
    </alternativeName>
    <alternativeName>
        <fullName evidence="1">Trans-2-decenoyl-[acyl-carrier-protein] isomerase</fullName>
        <ecNumber evidence="1">5.3.3.14</ecNumber>
    </alternativeName>
</protein>
<reference key="1">
    <citation type="journal article" date="2006" name="Genome Biol.">
        <title>Genomic analysis reveals that Pseudomonas aeruginosa virulence is combinatorial.</title>
        <authorList>
            <person name="Lee D.G."/>
            <person name="Urbach J.M."/>
            <person name="Wu G."/>
            <person name="Liberati N.T."/>
            <person name="Feinbaum R.L."/>
            <person name="Miyata S."/>
            <person name="Diggins L.T."/>
            <person name="He J."/>
            <person name="Saucier M."/>
            <person name="Deziel E."/>
            <person name="Friedman L."/>
            <person name="Li L."/>
            <person name="Grills G."/>
            <person name="Montgomery K."/>
            <person name="Kucherlapati R."/>
            <person name="Rahme L.G."/>
            <person name="Ausubel F.M."/>
        </authorList>
    </citation>
    <scope>NUCLEOTIDE SEQUENCE [LARGE SCALE GENOMIC DNA]</scope>
    <source>
        <strain>UCBPP-PA14</strain>
    </source>
</reference>
<sequence length="171" mass="18748">MTKQHAFTREDLLRCSRGELFGPGNAQLPAPNMLMIDRIVHISDVGGKYGKGELVAELDINPDLWFFACHFEGDPVMPGCLGLDAMWQLVGFYLGWQGNPGRGRALGSGEVKFFGQVLPTAKKVTYNIHIKRTINRSLVLAIADGTVSVDGREIYSAEGLRVGLFTSTDSF</sequence>
<evidence type="ECO:0000255" key="1">
    <source>
        <dbReference type="HAMAP-Rule" id="MF_00405"/>
    </source>
</evidence>
<accession>Q02K95</accession>
<proteinExistence type="inferred from homology"/>
<gene>
    <name evidence="1" type="primary">fabA</name>
    <name type="ordered locus">PA14_43680</name>
</gene>
<dbReference type="EC" id="4.2.1.59" evidence="1"/>
<dbReference type="EC" id="5.3.3.14" evidence="1"/>
<dbReference type="EMBL" id="CP000438">
    <property type="protein sequence ID" value="ABJ10791.1"/>
    <property type="molecule type" value="Genomic_DNA"/>
</dbReference>
<dbReference type="RefSeq" id="WP_003087475.1">
    <property type="nucleotide sequence ID" value="NZ_CP034244.1"/>
</dbReference>
<dbReference type="SMR" id="Q02K95"/>
<dbReference type="GeneID" id="77221769"/>
<dbReference type="KEGG" id="pau:PA14_43680"/>
<dbReference type="PseudoCAP" id="PA14_43680"/>
<dbReference type="HOGENOM" id="CLU_097925_0_0_6"/>
<dbReference type="BioCyc" id="PAER208963:G1G74-3664-MONOMER"/>
<dbReference type="UniPathway" id="UPA00094"/>
<dbReference type="Proteomes" id="UP000000653">
    <property type="component" value="Chromosome"/>
</dbReference>
<dbReference type="GO" id="GO:0005737">
    <property type="term" value="C:cytoplasm"/>
    <property type="evidence" value="ECO:0007669"/>
    <property type="project" value="UniProtKB-SubCell"/>
</dbReference>
<dbReference type="GO" id="GO:0019171">
    <property type="term" value="F:(3R)-hydroxyacyl-[acyl-carrier-protein] dehydratase activity"/>
    <property type="evidence" value="ECO:0007669"/>
    <property type="project" value="UniProtKB-UniRule"/>
</dbReference>
<dbReference type="GO" id="GO:0034017">
    <property type="term" value="F:trans-2-decenoyl-acyl-carrier-protein isomerase activity"/>
    <property type="evidence" value="ECO:0007669"/>
    <property type="project" value="UniProtKB-UniRule"/>
</dbReference>
<dbReference type="GO" id="GO:0006636">
    <property type="term" value="P:unsaturated fatty acid biosynthetic process"/>
    <property type="evidence" value="ECO:0007669"/>
    <property type="project" value="UniProtKB-UniRule"/>
</dbReference>
<dbReference type="CDD" id="cd01287">
    <property type="entry name" value="FabA"/>
    <property type="match status" value="1"/>
</dbReference>
<dbReference type="FunFam" id="3.10.129.10:FF:000003">
    <property type="entry name" value="3-hydroxydecanoyl-[acyl-carrier-protein] dehydratase"/>
    <property type="match status" value="1"/>
</dbReference>
<dbReference type="Gene3D" id="3.10.129.10">
    <property type="entry name" value="Hotdog Thioesterase"/>
    <property type="match status" value="1"/>
</dbReference>
<dbReference type="HAMAP" id="MF_00405">
    <property type="entry name" value="FabA"/>
    <property type="match status" value="1"/>
</dbReference>
<dbReference type="InterPro" id="IPR010083">
    <property type="entry name" value="FabA"/>
</dbReference>
<dbReference type="InterPro" id="IPR013114">
    <property type="entry name" value="FabA_FabZ"/>
</dbReference>
<dbReference type="InterPro" id="IPR029069">
    <property type="entry name" value="HotDog_dom_sf"/>
</dbReference>
<dbReference type="NCBIfam" id="TIGR01749">
    <property type="entry name" value="fabA"/>
    <property type="match status" value="1"/>
</dbReference>
<dbReference type="NCBIfam" id="NF003509">
    <property type="entry name" value="PRK05174.1"/>
    <property type="match status" value="1"/>
</dbReference>
<dbReference type="PANTHER" id="PTHR30272">
    <property type="entry name" value="3-HYDROXYACYL-[ACYL-CARRIER-PROTEIN] DEHYDRATASE"/>
    <property type="match status" value="1"/>
</dbReference>
<dbReference type="PANTHER" id="PTHR30272:SF8">
    <property type="entry name" value="3-HYDROXYDECANOYL-[ACYL-CARRIER-PROTEIN] DEHYDRATASE"/>
    <property type="match status" value="1"/>
</dbReference>
<dbReference type="Pfam" id="PF07977">
    <property type="entry name" value="FabA"/>
    <property type="match status" value="1"/>
</dbReference>
<dbReference type="SUPFAM" id="SSF54637">
    <property type="entry name" value="Thioesterase/thiol ester dehydrase-isomerase"/>
    <property type="match status" value="1"/>
</dbReference>
<name>FABA_PSEAB</name>